<name>6PGD3_ARATH</name>
<feature type="chain" id="PRO_0000421099" description="6-phosphogluconate dehydrogenase, decarboxylating 3, chloroplastic">
    <location>
        <begin position="1"/>
        <end position="487"/>
    </location>
</feature>
<feature type="active site" description="Proton acceptor" evidence="1">
    <location>
        <position position="188"/>
    </location>
</feature>
<feature type="active site" description="Proton donor" evidence="1">
    <location>
        <position position="195"/>
    </location>
</feature>
<feature type="binding site" evidence="1">
    <location>
        <begin position="13"/>
        <end position="18"/>
    </location>
    <ligand>
        <name>NADP(+)</name>
        <dbReference type="ChEBI" id="CHEBI:58349"/>
    </ligand>
</feature>
<feature type="binding site" evidence="1">
    <location>
        <begin position="36"/>
        <end position="38"/>
    </location>
    <ligand>
        <name>NADP(+)</name>
        <dbReference type="ChEBI" id="CHEBI:58349"/>
    </ligand>
</feature>
<feature type="binding site" evidence="1">
    <location>
        <begin position="80"/>
        <end position="82"/>
    </location>
    <ligand>
        <name>NADP(+)</name>
        <dbReference type="ChEBI" id="CHEBI:58349"/>
    </ligand>
</feature>
<feature type="binding site" evidence="1">
    <location>
        <position position="108"/>
    </location>
    <ligand>
        <name>NADP(+)</name>
        <dbReference type="ChEBI" id="CHEBI:58349"/>
    </ligand>
</feature>
<feature type="binding site" description="in other chain" evidence="1">
    <location>
        <position position="108"/>
    </location>
    <ligand>
        <name>substrate</name>
        <note>ligand shared between dimeric partners</note>
    </ligand>
</feature>
<feature type="binding site" description="in other chain" evidence="1">
    <location>
        <begin position="134"/>
        <end position="136"/>
    </location>
    <ligand>
        <name>substrate</name>
        <note>ligand shared between dimeric partners</note>
    </ligand>
</feature>
<feature type="binding site" description="in other chain" evidence="1">
    <location>
        <begin position="191"/>
        <end position="192"/>
    </location>
    <ligand>
        <name>substrate</name>
        <note>ligand shared between dimeric partners</note>
    </ligand>
</feature>
<feature type="binding site" description="in other chain" evidence="1">
    <location>
        <position position="196"/>
    </location>
    <ligand>
        <name>substrate</name>
        <note>ligand shared between dimeric partners</note>
    </ligand>
</feature>
<feature type="binding site" description="in other chain" evidence="1">
    <location>
        <position position="266"/>
    </location>
    <ligand>
        <name>substrate</name>
        <note>ligand shared between dimeric partners</note>
    </ligand>
</feature>
<feature type="binding site" description="in other chain" evidence="1">
    <location>
        <position position="293"/>
    </location>
    <ligand>
        <name>substrate</name>
        <note>ligand shared between dimeric partners</note>
    </ligand>
</feature>
<feature type="binding site" evidence="1">
    <location>
        <position position="458"/>
    </location>
    <ligand>
        <name>substrate</name>
        <note>ligand shared between dimeric partners</note>
    </ligand>
</feature>
<feature type="binding site" evidence="1">
    <location>
        <position position="464"/>
    </location>
    <ligand>
        <name>substrate</name>
        <note>ligand shared between dimeric partners</note>
    </ligand>
</feature>
<feature type="modified residue" description="N-acetylmethionine" evidence="9">
    <location>
        <position position="1"/>
    </location>
</feature>
<feature type="sequence conflict" description="In Ref. 4; AAM61057." evidence="6" ref="4">
    <original>S</original>
    <variation>P</variation>
    <location>
        <position position="40"/>
    </location>
</feature>
<feature type="sequence conflict" description="In Ref. 4; AAM61057." evidence="6" ref="4">
    <original>S</original>
    <variation>T</variation>
    <location>
        <position position="91"/>
    </location>
</feature>
<feature type="sequence conflict" description="In Ref. 4; AAM61057." evidence="6" ref="4">
    <original>P</original>
    <variation>T</variation>
    <location>
        <position position="395"/>
    </location>
</feature>
<feature type="sequence conflict" description="In Ref. 4; AAM61057." evidence="6" ref="4">
    <location>
        <position position="454"/>
    </location>
</feature>
<dbReference type="EC" id="1.1.1.44" evidence="2"/>
<dbReference type="EMBL" id="AB005233">
    <property type="protein sequence ID" value="BAB11473.1"/>
    <property type="molecule type" value="Genomic_DNA"/>
</dbReference>
<dbReference type="EMBL" id="CP002688">
    <property type="protein sequence ID" value="AED94705.1"/>
    <property type="molecule type" value="Genomic_DNA"/>
</dbReference>
<dbReference type="EMBL" id="CP002688">
    <property type="protein sequence ID" value="AED94706.1"/>
    <property type="molecule type" value="Genomic_DNA"/>
</dbReference>
<dbReference type="EMBL" id="CP002688">
    <property type="protein sequence ID" value="ANM71118.1"/>
    <property type="molecule type" value="Genomic_DNA"/>
</dbReference>
<dbReference type="EMBL" id="CP002688">
    <property type="protein sequence ID" value="ANM71119.1"/>
    <property type="molecule type" value="Genomic_DNA"/>
</dbReference>
<dbReference type="EMBL" id="AY125503">
    <property type="protein sequence ID" value="AAM78095.1"/>
    <property type="molecule type" value="mRNA"/>
</dbReference>
<dbReference type="EMBL" id="BT002261">
    <property type="protein sequence ID" value="AAN72272.1"/>
    <property type="molecule type" value="mRNA"/>
</dbReference>
<dbReference type="EMBL" id="AY084486">
    <property type="protein sequence ID" value="AAM61057.1"/>
    <property type="molecule type" value="mRNA"/>
</dbReference>
<dbReference type="RefSeq" id="NP_001318724.1">
    <property type="nucleotide sequence ID" value="NM_001344409.1"/>
</dbReference>
<dbReference type="RefSeq" id="NP_001332670.1">
    <property type="nucleotide sequence ID" value="NM_001344410.1"/>
</dbReference>
<dbReference type="RefSeq" id="NP_198982.1">
    <property type="nucleotide sequence ID" value="NM_123531.3"/>
</dbReference>
<dbReference type="RefSeq" id="NP_851113.1">
    <property type="nucleotide sequence ID" value="NM_180782.3"/>
</dbReference>
<dbReference type="SMR" id="Q9FFR3"/>
<dbReference type="BioGRID" id="19420">
    <property type="interactions" value="17"/>
</dbReference>
<dbReference type="FunCoup" id="Q9FFR3">
    <property type="interactions" value="2488"/>
</dbReference>
<dbReference type="IntAct" id="Q9FFR3">
    <property type="interactions" value="2"/>
</dbReference>
<dbReference type="STRING" id="3702.Q9FFR3"/>
<dbReference type="iPTMnet" id="Q9FFR3"/>
<dbReference type="SwissPalm" id="Q9FFR3"/>
<dbReference type="PaxDb" id="3702-AT5G41670.2"/>
<dbReference type="ProMEX" id="Q9FFR3"/>
<dbReference type="ProteomicsDB" id="244527"/>
<dbReference type="EnsemblPlants" id="AT5G41670.1">
    <property type="protein sequence ID" value="AT5G41670.1"/>
    <property type="gene ID" value="AT5G41670"/>
</dbReference>
<dbReference type="EnsemblPlants" id="AT5G41670.2">
    <property type="protein sequence ID" value="AT5G41670.2"/>
    <property type="gene ID" value="AT5G41670"/>
</dbReference>
<dbReference type="EnsemblPlants" id="AT5G41670.3">
    <property type="protein sequence ID" value="AT5G41670.3"/>
    <property type="gene ID" value="AT5G41670"/>
</dbReference>
<dbReference type="EnsemblPlants" id="AT5G41670.4">
    <property type="protein sequence ID" value="AT5G41670.4"/>
    <property type="gene ID" value="AT5G41670"/>
</dbReference>
<dbReference type="GeneID" id="834169"/>
<dbReference type="Gramene" id="AT5G41670.1">
    <property type="protein sequence ID" value="AT5G41670.1"/>
    <property type="gene ID" value="AT5G41670"/>
</dbReference>
<dbReference type="Gramene" id="AT5G41670.2">
    <property type="protein sequence ID" value="AT5G41670.2"/>
    <property type="gene ID" value="AT5G41670"/>
</dbReference>
<dbReference type="Gramene" id="AT5G41670.3">
    <property type="protein sequence ID" value="AT5G41670.3"/>
    <property type="gene ID" value="AT5G41670"/>
</dbReference>
<dbReference type="Gramene" id="AT5G41670.4">
    <property type="protein sequence ID" value="AT5G41670.4"/>
    <property type="gene ID" value="AT5G41670"/>
</dbReference>
<dbReference type="KEGG" id="ath:AT5G41670"/>
<dbReference type="Araport" id="AT5G41670"/>
<dbReference type="TAIR" id="AT5G41670">
    <property type="gene designation" value="PGD3"/>
</dbReference>
<dbReference type="eggNOG" id="KOG2653">
    <property type="taxonomic scope" value="Eukaryota"/>
</dbReference>
<dbReference type="HOGENOM" id="CLU_024540_4_2_1"/>
<dbReference type="InParanoid" id="Q9FFR3"/>
<dbReference type="OMA" id="SHGIDKK"/>
<dbReference type="PhylomeDB" id="Q9FFR3"/>
<dbReference type="BioCyc" id="ARA:AT5G41670-MONOMER"/>
<dbReference type="BRENDA" id="1.1.1.44">
    <property type="organism ID" value="399"/>
</dbReference>
<dbReference type="UniPathway" id="UPA00115">
    <property type="reaction ID" value="UER00410"/>
</dbReference>
<dbReference type="CD-CODE" id="4299E36E">
    <property type="entry name" value="Nucleolus"/>
</dbReference>
<dbReference type="PRO" id="PR:Q9FFR3"/>
<dbReference type="Proteomes" id="UP000006548">
    <property type="component" value="Chromosome 5"/>
</dbReference>
<dbReference type="ExpressionAtlas" id="Q9FFR3">
    <property type="expression patterns" value="baseline and differential"/>
</dbReference>
<dbReference type="GO" id="GO:0009507">
    <property type="term" value="C:chloroplast"/>
    <property type="evidence" value="ECO:0007005"/>
    <property type="project" value="TAIR"/>
</dbReference>
<dbReference type="GO" id="GO:0009570">
    <property type="term" value="C:chloroplast stroma"/>
    <property type="evidence" value="ECO:0007005"/>
    <property type="project" value="TAIR"/>
</dbReference>
<dbReference type="GO" id="GO:0005829">
    <property type="term" value="C:cytosol"/>
    <property type="evidence" value="ECO:0000314"/>
    <property type="project" value="TAIR"/>
</dbReference>
<dbReference type="GO" id="GO:0005739">
    <property type="term" value="C:mitochondrion"/>
    <property type="evidence" value="ECO:0007005"/>
    <property type="project" value="TAIR"/>
</dbReference>
<dbReference type="GO" id="GO:0009506">
    <property type="term" value="C:plasmodesma"/>
    <property type="evidence" value="ECO:0007005"/>
    <property type="project" value="TAIR"/>
</dbReference>
<dbReference type="GO" id="GO:0009536">
    <property type="term" value="C:plastid"/>
    <property type="evidence" value="ECO:0000314"/>
    <property type="project" value="TAIR"/>
</dbReference>
<dbReference type="GO" id="GO:0099503">
    <property type="term" value="C:secretory vesicle"/>
    <property type="evidence" value="ECO:0007005"/>
    <property type="project" value="TAIR"/>
</dbReference>
<dbReference type="GO" id="GO:0050661">
    <property type="term" value="F:NADP binding"/>
    <property type="evidence" value="ECO:0007669"/>
    <property type="project" value="InterPro"/>
</dbReference>
<dbReference type="GO" id="GO:0008114">
    <property type="term" value="F:phosphogluconate 2-dehydrogenase activity"/>
    <property type="evidence" value="ECO:0000314"/>
    <property type="project" value="TAIR"/>
</dbReference>
<dbReference type="GO" id="GO:0004616">
    <property type="term" value="F:phosphogluconate dehydrogenase (decarboxylating) activity"/>
    <property type="evidence" value="ECO:0007669"/>
    <property type="project" value="UniProtKB-EC"/>
</dbReference>
<dbReference type="GO" id="GO:0019521">
    <property type="term" value="P:D-gluconate metabolic process"/>
    <property type="evidence" value="ECO:0007669"/>
    <property type="project" value="UniProtKB-KW"/>
</dbReference>
<dbReference type="GO" id="GO:0009051">
    <property type="term" value="P:pentose-phosphate shunt, oxidative branch"/>
    <property type="evidence" value="ECO:0000316"/>
    <property type="project" value="TAIR"/>
</dbReference>
<dbReference type="GO" id="GO:0009750">
    <property type="term" value="P:response to fructose"/>
    <property type="evidence" value="ECO:0000270"/>
    <property type="project" value="TAIR"/>
</dbReference>
<dbReference type="GO" id="GO:0009749">
    <property type="term" value="P:response to glucose"/>
    <property type="evidence" value="ECO:0000270"/>
    <property type="project" value="TAIR"/>
</dbReference>
<dbReference type="GO" id="GO:0009744">
    <property type="term" value="P:response to sucrose"/>
    <property type="evidence" value="ECO:0000270"/>
    <property type="project" value="TAIR"/>
</dbReference>
<dbReference type="FunFam" id="1.10.1040.10:FF:000002">
    <property type="entry name" value="6-phosphogluconate dehydrogenase, decarboxylating"/>
    <property type="match status" value="1"/>
</dbReference>
<dbReference type="FunFam" id="1.20.5.320:FF:000001">
    <property type="entry name" value="6-phosphogluconate dehydrogenase, decarboxylating"/>
    <property type="match status" value="1"/>
</dbReference>
<dbReference type="FunFam" id="3.40.50.720:FF:000007">
    <property type="entry name" value="6-phosphogluconate dehydrogenase, decarboxylating"/>
    <property type="match status" value="1"/>
</dbReference>
<dbReference type="Gene3D" id="1.20.5.320">
    <property type="entry name" value="6-Phosphogluconate Dehydrogenase, domain 3"/>
    <property type="match status" value="1"/>
</dbReference>
<dbReference type="Gene3D" id="1.10.1040.10">
    <property type="entry name" value="N-(1-d-carboxylethyl)-l-norvaline Dehydrogenase, domain 2"/>
    <property type="match status" value="1"/>
</dbReference>
<dbReference type="Gene3D" id="3.40.50.720">
    <property type="entry name" value="NAD(P)-binding Rossmann-like Domain"/>
    <property type="match status" value="1"/>
</dbReference>
<dbReference type="InterPro" id="IPR008927">
    <property type="entry name" value="6-PGluconate_DH-like_C_sf"/>
</dbReference>
<dbReference type="InterPro" id="IPR013328">
    <property type="entry name" value="6PGD_dom2"/>
</dbReference>
<dbReference type="InterPro" id="IPR006114">
    <property type="entry name" value="6PGDH_C"/>
</dbReference>
<dbReference type="InterPro" id="IPR006113">
    <property type="entry name" value="6PGDH_Gnd/GntZ"/>
</dbReference>
<dbReference type="InterPro" id="IPR006115">
    <property type="entry name" value="6PGDH_NADP-bd"/>
</dbReference>
<dbReference type="InterPro" id="IPR036291">
    <property type="entry name" value="NAD(P)-bd_dom_sf"/>
</dbReference>
<dbReference type="InterPro" id="IPR006183">
    <property type="entry name" value="Pgluconate_DH"/>
</dbReference>
<dbReference type="NCBIfam" id="TIGR00873">
    <property type="entry name" value="gnd"/>
    <property type="match status" value="1"/>
</dbReference>
<dbReference type="NCBIfam" id="NF006765">
    <property type="entry name" value="PRK09287.1"/>
    <property type="match status" value="1"/>
</dbReference>
<dbReference type="PANTHER" id="PTHR11811">
    <property type="entry name" value="6-PHOSPHOGLUCONATE DEHYDROGENASE"/>
    <property type="match status" value="1"/>
</dbReference>
<dbReference type="Pfam" id="PF00393">
    <property type="entry name" value="6PGD"/>
    <property type="match status" value="1"/>
</dbReference>
<dbReference type="Pfam" id="PF03446">
    <property type="entry name" value="NAD_binding_2"/>
    <property type="match status" value="1"/>
</dbReference>
<dbReference type="PIRSF" id="PIRSF000109">
    <property type="entry name" value="6PGD"/>
    <property type="match status" value="1"/>
</dbReference>
<dbReference type="PRINTS" id="PR00076">
    <property type="entry name" value="6PGDHDRGNASE"/>
</dbReference>
<dbReference type="SMART" id="SM01350">
    <property type="entry name" value="6PGD"/>
    <property type="match status" value="1"/>
</dbReference>
<dbReference type="SUPFAM" id="SSF48179">
    <property type="entry name" value="6-phosphogluconate dehydrogenase C-terminal domain-like"/>
    <property type="match status" value="1"/>
</dbReference>
<dbReference type="SUPFAM" id="SSF51735">
    <property type="entry name" value="NAD(P)-binding Rossmann-fold domains"/>
    <property type="match status" value="1"/>
</dbReference>
<comment type="function">
    <text evidence="2">Catalyzes the oxidative decarboxylation of 6-phosphogluconate to ribulose 5-phosphate and CO(2), with concomitant reduction of NADP to NADPH.</text>
</comment>
<comment type="catalytic activity">
    <reaction evidence="2">
        <text>6-phospho-D-gluconate + NADP(+) = D-ribulose 5-phosphate + CO2 + NADPH</text>
        <dbReference type="Rhea" id="RHEA:10116"/>
        <dbReference type="ChEBI" id="CHEBI:16526"/>
        <dbReference type="ChEBI" id="CHEBI:57783"/>
        <dbReference type="ChEBI" id="CHEBI:58121"/>
        <dbReference type="ChEBI" id="CHEBI:58349"/>
        <dbReference type="ChEBI" id="CHEBI:58759"/>
        <dbReference type="EC" id="1.1.1.44"/>
    </reaction>
</comment>
<comment type="pathway">
    <text evidence="6">Carbohydrate degradation; pentose phosphate pathway; D-ribulose 5-phosphate from D-glucose 6-phosphate (oxidative stage): step 3/3.</text>
</comment>
<comment type="subunit">
    <text evidence="4">Forms homodimer (PubMed:27366940). Forms heterodimers with PGD1 or PGD2 (PubMed:27366940).</text>
</comment>
<comment type="subcellular location">
    <subcellularLocation>
        <location evidence="3">Plastid</location>
        <location evidence="3">Chloroplast</location>
    </subcellularLocation>
    <subcellularLocation>
        <location evidence="3">Cytoplasm</location>
        <location evidence="3">Cytosol</location>
    </subcellularLocation>
</comment>
<comment type="similarity">
    <text evidence="6">Belongs to the 6-phosphogluconate dehydrogenase family.</text>
</comment>
<reference key="1">
    <citation type="journal article" date="1997" name="DNA Res.">
        <title>Structural analysis of Arabidopsis thaliana chromosome 5. I. Sequence features of the 1.6 Mb regions covered by twenty physically assigned P1 clones.</title>
        <authorList>
            <person name="Sato S."/>
            <person name="Kotani H."/>
            <person name="Nakamura Y."/>
            <person name="Kaneko T."/>
            <person name="Asamizu E."/>
            <person name="Fukami M."/>
            <person name="Miyajima N."/>
            <person name="Tabata S."/>
        </authorList>
    </citation>
    <scope>NUCLEOTIDE SEQUENCE [LARGE SCALE GENOMIC DNA]</scope>
    <source>
        <strain>cv. Columbia</strain>
    </source>
</reference>
<reference key="2">
    <citation type="journal article" date="2017" name="Plant J.">
        <title>Araport11: a complete reannotation of the Arabidopsis thaliana reference genome.</title>
        <authorList>
            <person name="Cheng C.Y."/>
            <person name="Krishnakumar V."/>
            <person name="Chan A.P."/>
            <person name="Thibaud-Nissen F."/>
            <person name="Schobel S."/>
            <person name="Town C.D."/>
        </authorList>
    </citation>
    <scope>GENOME REANNOTATION</scope>
    <source>
        <strain>cv. Columbia</strain>
    </source>
</reference>
<reference key="3">
    <citation type="journal article" date="2003" name="Science">
        <title>Empirical analysis of transcriptional activity in the Arabidopsis genome.</title>
        <authorList>
            <person name="Yamada K."/>
            <person name="Lim J."/>
            <person name="Dale J.M."/>
            <person name="Chen H."/>
            <person name="Shinn P."/>
            <person name="Palm C.J."/>
            <person name="Southwick A.M."/>
            <person name="Wu H.C."/>
            <person name="Kim C.J."/>
            <person name="Nguyen M."/>
            <person name="Pham P.K."/>
            <person name="Cheuk R.F."/>
            <person name="Karlin-Newmann G."/>
            <person name="Liu S.X."/>
            <person name="Lam B."/>
            <person name="Sakano H."/>
            <person name="Wu T."/>
            <person name="Yu G."/>
            <person name="Miranda M."/>
            <person name="Quach H.L."/>
            <person name="Tripp M."/>
            <person name="Chang C.H."/>
            <person name="Lee J.M."/>
            <person name="Toriumi M.J."/>
            <person name="Chan M.M."/>
            <person name="Tang C.C."/>
            <person name="Onodera C.S."/>
            <person name="Deng J.M."/>
            <person name="Akiyama K."/>
            <person name="Ansari Y."/>
            <person name="Arakawa T."/>
            <person name="Banh J."/>
            <person name="Banno F."/>
            <person name="Bowser L."/>
            <person name="Brooks S.Y."/>
            <person name="Carninci P."/>
            <person name="Chao Q."/>
            <person name="Choy N."/>
            <person name="Enju A."/>
            <person name="Goldsmith A.D."/>
            <person name="Gurjal M."/>
            <person name="Hansen N.F."/>
            <person name="Hayashizaki Y."/>
            <person name="Johnson-Hopson C."/>
            <person name="Hsuan V.W."/>
            <person name="Iida K."/>
            <person name="Karnes M."/>
            <person name="Khan S."/>
            <person name="Koesema E."/>
            <person name="Ishida J."/>
            <person name="Jiang P.X."/>
            <person name="Jones T."/>
            <person name="Kawai J."/>
            <person name="Kamiya A."/>
            <person name="Meyers C."/>
            <person name="Nakajima M."/>
            <person name="Narusaka M."/>
            <person name="Seki M."/>
            <person name="Sakurai T."/>
            <person name="Satou M."/>
            <person name="Tamse R."/>
            <person name="Vaysberg M."/>
            <person name="Wallender E.K."/>
            <person name="Wong C."/>
            <person name="Yamamura Y."/>
            <person name="Yuan S."/>
            <person name="Shinozaki K."/>
            <person name="Davis R.W."/>
            <person name="Theologis A."/>
            <person name="Ecker J.R."/>
        </authorList>
    </citation>
    <scope>NUCLEOTIDE SEQUENCE [LARGE SCALE MRNA]</scope>
    <source>
        <strain>cv. Columbia</strain>
    </source>
</reference>
<reference key="4">
    <citation type="submission" date="2002-03" db="EMBL/GenBank/DDBJ databases">
        <title>Full-length cDNA from Arabidopsis thaliana.</title>
        <authorList>
            <person name="Brover V.V."/>
            <person name="Troukhan M.E."/>
            <person name="Alexandrov N.A."/>
            <person name="Lu Y.-P."/>
            <person name="Flavell R.B."/>
            <person name="Feldmann K.A."/>
        </authorList>
    </citation>
    <scope>NUCLEOTIDE SEQUENCE [LARGE SCALE MRNA]</scope>
</reference>
<reference key="5">
    <citation type="journal article" date="2003" name="Curr. Opin. Plant Biol.">
        <title>The oxidative pentose phosphate pathway: structure and organisation.</title>
        <authorList>
            <person name="Kruger N.J."/>
            <person name="von Schaewen A."/>
        </authorList>
    </citation>
    <scope>REVIEW</scope>
</reference>
<reference key="6">
    <citation type="journal article" date="2007" name="BMC Genomics">
        <title>Sequence-indexed mutations in maize using the UniformMu transposon-tagging population.</title>
        <authorList>
            <person name="Settles A.M."/>
            <person name="Holding D.R."/>
            <person name="Tan B.C."/>
            <person name="Latshaw S.P."/>
            <person name="Liu J."/>
            <person name="Suzuki M."/>
            <person name="Li L."/>
            <person name="O'Brien B.A."/>
            <person name="Fajardo D.S."/>
            <person name="Wroclawska E."/>
            <person name="Tseung C.W."/>
            <person name="Lai J."/>
            <person name="Hunter C.T. III"/>
            <person name="Avigne W.T."/>
            <person name="Baier J."/>
            <person name="Messing J."/>
            <person name="Hannah L.C."/>
            <person name="Koch K.E."/>
            <person name="Becraft P.W."/>
            <person name="Larkins B.A."/>
            <person name="McCarty D.R."/>
        </authorList>
    </citation>
    <scope>GENE FAMILY</scope>
</reference>
<reference key="7">
    <citation type="journal article" date="2012" name="Mol. Cell. Proteomics">
        <title>Comparative large-scale characterisation of plant vs. mammal proteins reveals similar and idiosyncratic N-alpha acetylation features.</title>
        <authorList>
            <person name="Bienvenut W.V."/>
            <person name="Sumpton D."/>
            <person name="Martinez A."/>
            <person name="Lilla S."/>
            <person name="Espagne C."/>
            <person name="Meinnel T."/>
            <person name="Giglione C."/>
        </authorList>
    </citation>
    <scope>ACETYLATION [LARGE SCALE ANALYSIS] AT MET-1</scope>
    <scope>IDENTIFICATION BY MASS SPECTROMETRY [LARGE SCALE ANALYSIS]</scope>
</reference>
<reference key="8">
    <citation type="journal article" date="2016" name="Plant Physiol.">
        <title>Defects in peroxisomal 6-phosphogluconate dehydrogenase isoform PGD2 prevent gametophytic interaction in Arabidopsis thaliana.</title>
        <authorList>
            <person name="Hoelscher C."/>
            <person name="Lutterbey M.C."/>
            <person name="Lansing H."/>
            <person name="Meyer T."/>
            <person name="Fischer K."/>
            <person name="von Schaewen A."/>
        </authorList>
    </citation>
    <scope>SUBCELLULAR LOCATION</scope>
</reference>
<reference key="9">
    <citation type="journal article" date="2016" name="Plant Signal. Behav.">
        <title>Analysis of homo- and hetero-dimerization among the three 6-phosphogluconate dehydrogenase isoforms of Arabidopsis.</title>
        <authorList>
            <person name="Lutterbey M.C."/>
            <person name="von Schaewen A."/>
        </authorList>
    </citation>
    <scope>HOMODIMERIZATION</scope>
    <scope>HETERODIMERIZATION</scope>
</reference>
<protein>
    <recommendedName>
        <fullName evidence="6">6-phosphogluconate dehydrogenase, decarboxylating 3, chloroplastic</fullName>
        <ecNumber evidence="2">1.1.1.44</ecNumber>
    </recommendedName>
</protein>
<organism>
    <name type="scientific">Arabidopsis thaliana</name>
    <name type="common">Mouse-ear cress</name>
    <dbReference type="NCBI Taxonomy" id="3702"/>
    <lineage>
        <taxon>Eukaryota</taxon>
        <taxon>Viridiplantae</taxon>
        <taxon>Streptophyta</taxon>
        <taxon>Embryophyta</taxon>
        <taxon>Tracheophyta</taxon>
        <taxon>Spermatophyta</taxon>
        <taxon>Magnoliopsida</taxon>
        <taxon>eudicotyledons</taxon>
        <taxon>Gunneridae</taxon>
        <taxon>Pentapetalae</taxon>
        <taxon>rosids</taxon>
        <taxon>malvids</taxon>
        <taxon>Brassicales</taxon>
        <taxon>Brassicaceae</taxon>
        <taxon>Camelineae</taxon>
        <taxon>Arabidopsis</taxon>
    </lineage>
</organism>
<gene>
    <name evidence="5" type="primary">PGD3</name>
    <name evidence="7" type="ordered locus">At5g41670</name>
    <name evidence="8" type="ORF">MBK23.20</name>
</gene>
<proteinExistence type="evidence at protein level"/>
<sequence>MESVALSRIGLAGLAVMGQNLALNIADKGFPISVYNRTTSKVDETLDRASNEGKLPVAGQYSPRDFVLSIQRPRSVIILVKAGAPVDQTISALSEYMEPGDCIIDGGNEWYQNTERRIVEAEKKGLLYLGMGVSGGEEGARNGPSLMPGGSFTAYNNVKDILEKVAAQVEDGPCVTYIGEGGSGNFVKMVHNGIEYGDMQLISEAYDVLKNVGGLSNDELAEIFTEWNRGELESFLVEITSDIFRVKDDYGDGELVDKILDKTGMKGTGKWTVQQAAELSVAAPTIAASLDCRYLSGLKDERENAAKVLEEAGLKEDIGSASRGVDKKRLIDDVRQALYASKICSYAQGMNLLRAKSLEKGWDLNLGEMARIWKGGCIIRAVFLDRIKKAYQRNPNLASLVVDPDFAKEMVQRQAAWRRVVGLAISAGISTPGMCASLAYFDTYRRARLPANLVQAQRDLFGAHTYERTDRPGAYHTEWTKLARKSQ</sequence>
<keyword id="KW-0007">Acetylation</keyword>
<keyword id="KW-0150">Chloroplast</keyword>
<keyword id="KW-0963">Cytoplasm</keyword>
<keyword id="KW-0311">Gluconate utilization</keyword>
<keyword id="KW-0521">NADP</keyword>
<keyword id="KW-0560">Oxidoreductase</keyword>
<keyword id="KW-0570">Pentose shunt</keyword>
<keyword id="KW-0934">Plastid</keyword>
<keyword id="KW-1185">Reference proteome</keyword>
<evidence type="ECO:0000250" key="1">
    <source>
        <dbReference type="UniProtKB" id="P96789"/>
    </source>
</evidence>
<evidence type="ECO:0000250" key="2">
    <source>
        <dbReference type="UniProtKB" id="Q9FWA3"/>
    </source>
</evidence>
<evidence type="ECO:0000269" key="3">
    <source>
    </source>
</evidence>
<evidence type="ECO:0000269" key="4">
    <source>
    </source>
</evidence>
<evidence type="ECO:0000303" key="5">
    <source>
    </source>
</evidence>
<evidence type="ECO:0000305" key="6"/>
<evidence type="ECO:0000312" key="7">
    <source>
        <dbReference type="Araport" id="AT5G41670"/>
    </source>
</evidence>
<evidence type="ECO:0000312" key="8">
    <source>
        <dbReference type="EMBL" id="BAB11473.1"/>
    </source>
</evidence>
<evidence type="ECO:0007744" key="9">
    <source>
    </source>
</evidence>
<accession>Q9FFR3</accession>
<accession>Q8LG34</accession>